<keyword id="KW-0067">ATP-binding</keyword>
<keyword id="KW-0460">Magnesium</keyword>
<keyword id="KW-0464">Manganese</keyword>
<keyword id="KW-0479">Metal-binding</keyword>
<keyword id="KW-0547">Nucleotide-binding</keyword>
<keyword id="KW-0548">Nucleotidyltransferase</keyword>
<keyword id="KW-1185">Reference proteome</keyword>
<keyword id="KW-0808">Transferase</keyword>
<evidence type="ECO:0000255" key="1">
    <source>
        <dbReference type="HAMAP-Rule" id="MF_00692"/>
    </source>
</evidence>
<comment type="function">
    <text evidence="1">Nucleotidyltransferase involved in the post-translational modification of proteins. It can catalyze the addition of adenosine monophosphate (AMP) or uridine monophosphate (UMP) to a protein, resulting in modifications known as AMPylation and UMPylation.</text>
</comment>
<comment type="catalytic activity">
    <reaction evidence="1">
        <text>L-seryl-[protein] + ATP = 3-O-(5'-adenylyl)-L-seryl-[protein] + diphosphate</text>
        <dbReference type="Rhea" id="RHEA:58120"/>
        <dbReference type="Rhea" id="RHEA-COMP:9863"/>
        <dbReference type="Rhea" id="RHEA-COMP:15073"/>
        <dbReference type="ChEBI" id="CHEBI:29999"/>
        <dbReference type="ChEBI" id="CHEBI:30616"/>
        <dbReference type="ChEBI" id="CHEBI:33019"/>
        <dbReference type="ChEBI" id="CHEBI:142516"/>
        <dbReference type="EC" id="2.7.7.108"/>
    </reaction>
</comment>
<comment type="catalytic activity">
    <reaction evidence="1">
        <text>L-threonyl-[protein] + ATP = 3-O-(5'-adenylyl)-L-threonyl-[protein] + diphosphate</text>
        <dbReference type="Rhea" id="RHEA:54292"/>
        <dbReference type="Rhea" id="RHEA-COMP:11060"/>
        <dbReference type="Rhea" id="RHEA-COMP:13847"/>
        <dbReference type="ChEBI" id="CHEBI:30013"/>
        <dbReference type="ChEBI" id="CHEBI:30616"/>
        <dbReference type="ChEBI" id="CHEBI:33019"/>
        <dbReference type="ChEBI" id="CHEBI:138113"/>
        <dbReference type="EC" id="2.7.7.108"/>
    </reaction>
</comment>
<comment type="catalytic activity">
    <reaction evidence="1">
        <text>L-tyrosyl-[protein] + ATP = O-(5'-adenylyl)-L-tyrosyl-[protein] + diphosphate</text>
        <dbReference type="Rhea" id="RHEA:54288"/>
        <dbReference type="Rhea" id="RHEA-COMP:10136"/>
        <dbReference type="Rhea" id="RHEA-COMP:13846"/>
        <dbReference type="ChEBI" id="CHEBI:30616"/>
        <dbReference type="ChEBI" id="CHEBI:33019"/>
        <dbReference type="ChEBI" id="CHEBI:46858"/>
        <dbReference type="ChEBI" id="CHEBI:83624"/>
        <dbReference type="EC" id="2.7.7.108"/>
    </reaction>
</comment>
<comment type="catalytic activity">
    <reaction evidence="1">
        <text>L-histidyl-[protein] + UTP = N(tele)-(5'-uridylyl)-L-histidyl-[protein] + diphosphate</text>
        <dbReference type="Rhea" id="RHEA:83891"/>
        <dbReference type="Rhea" id="RHEA-COMP:9745"/>
        <dbReference type="Rhea" id="RHEA-COMP:20239"/>
        <dbReference type="ChEBI" id="CHEBI:29979"/>
        <dbReference type="ChEBI" id="CHEBI:33019"/>
        <dbReference type="ChEBI" id="CHEBI:46398"/>
        <dbReference type="ChEBI" id="CHEBI:233474"/>
    </reaction>
</comment>
<comment type="catalytic activity">
    <reaction evidence="1">
        <text>L-seryl-[protein] + UTP = O-(5'-uridylyl)-L-seryl-[protein] + diphosphate</text>
        <dbReference type="Rhea" id="RHEA:64604"/>
        <dbReference type="Rhea" id="RHEA-COMP:9863"/>
        <dbReference type="Rhea" id="RHEA-COMP:16635"/>
        <dbReference type="ChEBI" id="CHEBI:29999"/>
        <dbReference type="ChEBI" id="CHEBI:33019"/>
        <dbReference type="ChEBI" id="CHEBI:46398"/>
        <dbReference type="ChEBI" id="CHEBI:156051"/>
    </reaction>
</comment>
<comment type="catalytic activity">
    <reaction evidence="1">
        <text>L-tyrosyl-[protein] + UTP = O-(5'-uridylyl)-L-tyrosyl-[protein] + diphosphate</text>
        <dbReference type="Rhea" id="RHEA:83887"/>
        <dbReference type="Rhea" id="RHEA-COMP:10136"/>
        <dbReference type="Rhea" id="RHEA-COMP:20238"/>
        <dbReference type="ChEBI" id="CHEBI:33019"/>
        <dbReference type="ChEBI" id="CHEBI:46398"/>
        <dbReference type="ChEBI" id="CHEBI:46858"/>
        <dbReference type="ChEBI" id="CHEBI:90602"/>
    </reaction>
</comment>
<comment type="cofactor">
    <cofactor evidence="1">
        <name>Mg(2+)</name>
        <dbReference type="ChEBI" id="CHEBI:18420"/>
    </cofactor>
    <cofactor evidence="1">
        <name>Mn(2+)</name>
        <dbReference type="ChEBI" id="CHEBI:29035"/>
    </cofactor>
</comment>
<comment type="similarity">
    <text evidence="1">Belongs to the SELO family.</text>
</comment>
<reference key="1">
    <citation type="journal article" date="2006" name="J. Bacteriol.">
        <title>The genome sequence of the obligately chemolithoautotrophic, facultatively anaerobic bacterium Thiobacillus denitrificans.</title>
        <authorList>
            <person name="Beller H.R."/>
            <person name="Chain P.S."/>
            <person name="Letain T.E."/>
            <person name="Chakicherla A."/>
            <person name="Larimer F.W."/>
            <person name="Richardson P.M."/>
            <person name="Coleman M.A."/>
            <person name="Wood A.P."/>
            <person name="Kelly D.P."/>
        </authorList>
    </citation>
    <scope>NUCLEOTIDE SEQUENCE [LARGE SCALE GENOMIC DNA]</scope>
    <source>
        <strain>ATCC 25259 / T1</strain>
    </source>
</reference>
<dbReference type="EC" id="2.7.7.-" evidence="1"/>
<dbReference type="EC" id="2.7.7.108" evidence="1"/>
<dbReference type="EMBL" id="CP000116">
    <property type="protein sequence ID" value="AAZ96972.1"/>
    <property type="molecule type" value="Genomic_DNA"/>
</dbReference>
<dbReference type="RefSeq" id="WP_011311531.1">
    <property type="nucleotide sequence ID" value="NC_007404.1"/>
</dbReference>
<dbReference type="SMR" id="Q3SEY2"/>
<dbReference type="STRING" id="292415.Tbd_1019"/>
<dbReference type="KEGG" id="tbd:Tbd_1019"/>
<dbReference type="eggNOG" id="COG0397">
    <property type="taxonomic scope" value="Bacteria"/>
</dbReference>
<dbReference type="HOGENOM" id="CLU_010245_4_0_4"/>
<dbReference type="OrthoDB" id="9776281at2"/>
<dbReference type="Proteomes" id="UP000008291">
    <property type="component" value="Chromosome"/>
</dbReference>
<dbReference type="GO" id="GO:0070733">
    <property type="term" value="F:AMPylase activity"/>
    <property type="evidence" value="ECO:0007669"/>
    <property type="project" value="TreeGrafter"/>
</dbReference>
<dbReference type="GO" id="GO:0005524">
    <property type="term" value="F:ATP binding"/>
    <property type="evidence" value="ECO:0007669"/>
    <property type="project" value="UniProtKB-UniRule"/>
</dbReference>
<dbReference type="GO" id="GO:0000287">
    <property type="term" value="F:magnesium ion binding"/>
    <property type="evidence" value="ECO:0007669"/>
    <property type="project" value="UniProtKB-UniRule"/>
</dbReference>
<dbReference type="HAMAP" id="MF_00692">
    <property type="entry name" value="YdiU_SelO"/>
    <property type="match status" value="1"/>
</dbReference>
<dbReference type="InterPro" id="IPR003846">
    <property type="entry name" value="SelO"/>
</dbReference>
<dbReference type="NCBIfam" id="NF000658">
    <property type="entry name" value="PRK00029.1"/>
    <property type="match status" value="1"/>
</dbReference>
<dbReference type="PANTHER" id="PTHR32057">
    <property type="entry name" value="PROTEIN ADENYLYLTRANSFERASE SELO, MITOCHONDRIAL"/>
    <property type="match status" value="1"/>
</dbReference>
<dbReference type="PANTHER" id="PTHR32057:SF14">
    <property type="entry name" value="PROTEIN ADENYLYLTRANSFERASE SELO, MITOCHONDRIAL"/>
    <property type="match status" value="1"/>
</dbReference>
<dbReference type="Pfam" id="PF02696">
    <property type="entry name" value="SelO"/>
    <property type="match status" value="1"/>
</dbReference>
<gene>
    <name evidence="1" type="primary">ydiU</name>
    <name evidence="1" type="synonym">selO</name>
    <name type="ordered locus">Tbd_1019</name>
</gene>
<protein>
    <recommendedName>
        <fullName evidence="1">Protein nucleotidyltransferase YdiU</fullName>
        <ecNumber evidence="1">2.7.7.-</ecNumber>
    </recommendedName>
    <alternativeName>
        <fullName evidence="1">Protein adenylyltransferase YdiU</fullName>
        <ecNumber evidence="1">2.7.7.108</ecNumber>
    </alternativeName>
    <alternativeName>
        <fullName evidence="1">Protein uridylyltransferase YdiU</fullName>
        <ecNumber evidence="1">2.7.7.-</ecNumber>
    </alternativeName>
</protein>
<proteinExistence type="inferred from homology"/>
<name>SELO_THIDA</name>
<organism>
    <name type="scientific">Thiobacillus denitrificans (strain ATCC 25259 / T1)</name>
    <dbReference type="NCBI Taxonomy" id="292415"/>
    <lineage>
        <taxon>Bacteria</taxon>
        <taxon>Pseudomonadati</taxon>
        <taxon>Pseudomonadota</taxon>
        <taxon>Betaproteobacteria</taxon>
        <taxon>Nitrosomonadales</taxon>
        <taxon>Thiobacillaceae</taxon>
        <taxon>Thiobacillus</taxon>
    </lineage>
</organism>
<feature type="chain" id="PRO_0000271875" description="Protein nucleotidyltransferase YdiU">
    <location>
        <begin position="1"/>
        <end position="488"/>
    </location>
</feature>
<feature type="active site" description="Proton acceptor" evidence="1">
    <location>
        <position position="252"/>
    </location>
</feature>
<feature type="binding site" evidence="1">
    <location>
        <position position="90"/>
    </location>
    <ligand>
        <name>ATP</name>
        <dbReference type="ChEBI" id="CHEBI:30616"/>
    </ligand>
</feature>
<feature type="binding site" evidence="1">
    <location>
        <position position="92"/>
    </location>
    <ligand>
        <name>ATP</name>
        <dbReference type="ChEBI" id="CHEBI:30616"/>
    </ligand>
</feature>
<feature type="binding site" evidence="1">
    <location>
        <position position="93"/>
    </location>
    <ligand>
        <name>ATP</name>
        <dbReference type="ChEBI" id="CHEBI:30616"/>
    </ligand>
</feature>
<feature type="binding site" evidence="1">
    <location>
        <position position="113"/>
    </location>
    <ligand>
        <name>ATP</name>
        <dbReference type="ChEBI" id="CHEBI:30616"/>
    </ligand>
</feature>
<feature type="binding site" evidence="1">
    <location>
        <position position="125"/>
    </location>
    <ligand>
        <name>ATP</name>
        <dbReference type="ChEBI" id="CHEBI:30616"/>
    </ligand>
</feature>
<feature type="binding site" evidence="1">
    <location>
        <position position="126"/>
    </location>
    <ligand>
        <name>ATP</name>
        <dbReference type="ChEBI" id="CHEBI:30616"/>
    </ligand>
</feature>
<feature type="binding site" evidence="1">
    <location>
        <position position="176"/>
    </location>
    <ligand>
        <name>ATP</name>
        <dbReference type="ChEBI" id="CHEBI:30616"/>
    </ligand>
</feature>
<feature type="binding site" evidence="1">
    <location>
        <position position="183"/>
    </location>
    <ligand>
        <name>ATP</name>
        <dbReference type="ChEBI" id="CHEBI:30616"/>
    </ligand>
</feature>
<feature type="binding site" evidence="1">
    <location>
        <position position="253"/>
    </location>
    <ligand>
        <name>Mg(2+)</name>
        <dbReference type="ChEBI" id="CHEBI:18420"/>
    </ligand>
</feature>
<feature type="binding site" evidence="1">
    <location>
        <position position="262"/>
    </location>
    <ligand>
        <name>ATP</name>
        <dbReference type="ChEBI" id="CHEBI:30616"/>
    </ligand>
</feature>
<feature type="binding site" evidence="1">
    <location>
        <position position="262"/>
    </location>
    <ligand>
        <name>Mg(2+)</name>
        <dbReference type="ChEBI" id="CHEBI:18420"/>
    </ligand>
</feature>
<sequence length="488" mass="54285">MATLESLTFDNGFARLPETYYARVCPTPVPDPYLVCYSPEALSLLDLDATELKRPETIETLAGNRLLPGMDAIAALYAGHQFGHYVPQLGDGRAILLGEVRNRAGEGWEIQLKGAGRTPYSRGGDGRAVLRSSIREFLCSEAMHALDIPTTRALAVVGSDHPVYREDEETAALVTRLAPSFVRFGSFEVFYYRNQVEPIRHLADYVIARYYPELKTLADPYPEFLRQVSLRTAELMAQWQAVGFSHGVMNTDNMSILGLTLDYGPFGFLDAFDPGFVCNHSDTGGRYAFDQQPDVAAWNLTKLAQALVPLMSVETASQAISEYPQAFGRAYLARMAAKFGLAPGDDTVPLITDALQLLAGNRVDYTIFLRKLCAFDSQADAGNAPLRDLFLDRAAFDAWAVRYGAALRQHGQPDAERAATMRTRNPKYILRNYLAENAIRRAADLRDYSEVERLHRLLARPFDEQPAFEAYAAEPPDWAKRIEVSCSS</sequence>
<accession>Q3SEY2</accession>